<comment type="function">
    <text evidence="1">Recognizes and binds the 7-methylguanosine-containing mRNA cap during an early step in the initiation of protein synthesis and facilitates ribosome binding by inducing the unwinding of the mRNAs secondary structures.</text>
</comment>
<comment type="subunit">
    <text evidence="1">eIF4F is a multi-subunit complex, the composition of which varies with external and internal environmental conditions. It is composed of at least eif4a, eif4e and eif4g (By similarity).</text>
</comment>
<comment type="similarity">
    <text evidence="3">Belongs to the eukaryotic initiation factor 4E family.</text>
</comment>
<accession>Q55FE0</accession>
<name>IF4E_DICDI</name>
<sequence length="250" mass="29023">MTTNKDVECLVEPTSNISITEENKNVTSETTTTTNNTQNKETETTDNINKEETADKENKEEQQQEENPENLIKHPLQNRWSLWYDYQSGKINPEHWVDSLKKVISFDSVEDFWCVFNNLPNVSNLKQGSSYHLFKDDIEPKWEHESNKRGGKWFVMVKDKSRCDNQWLQSVMACVGETFDSSDEICGIVYNSRKNGDKISVWTKTAQDEKATRDVGNCLKKILEIDQTIQYTPHEDFIRSSKGSKNLYEC</sequence>
<evidence type="ECO:0000250" key="1">
    <source>
        <dbReference type="UniProtKB" id="P06730"/>
    </source>
</evidence>
<evidence type="ECO:0000256" key="2">
    <source>
        <dbReference type="SAM" id="MobiDB-lite"/>
    </source>
</evidence>
<evidence type="ECO:0000305" key="3"/>
<organism>
    <name type="scientific">Dictyostelium discoideum</name>
    <name type="common">Social amoeba</name>
    <dbReference type="NCBI Taxonomy" id="44689"/>
    <lineage>
        <taxon>Eukaryota</taxon>
        <taxon>Amoebozoa</taxon>
        <taxon>Evosea</taxon>
        <taxon>Eumycetozoa</taxon>
        <taxon>Dictyostelia</taxon>
        <taxon>Dictyosteliales</taxon>
        <taxon>Dictyosteliaceae</taxon>
        <taxon>Dictyostelium</taxon>
    </lineage>
</organism>
<keyword id="KW-0396">Initiation factor</keyword>
<keyword id="KW-0648">Protein biosynthesis</keyword>
<keyword id="KW-1185">Reference proteome</keyword>
<keyword id="KW-0694">RNA-binding</keyword>
<keyword id="KW-0810">Translation regulation</keyword>
<reference key="1">
    <citation type="journal article" date="2005" name="Nature">
        <title>The genome of the social amoeba Dictyostelium discoideum.</title>
        <authorList>
            <person name="Eichinger L."/>
            <person name="Pachebat J.A."/>
            <person name="Gloeckner G."/>
            <person name="Rajandream M.A."/>
            <person name="Sucgang R."/>
            <person name="Berriman M."/>
            <person name="Song J."/>
            <person name="Olsen R."/>
            <person name="Szafranski K."/>
            <person name="Xu Q."/>
            <person name="Tunggal B."/>
            <person name="Kummerfeld S."/>
            <person name="Madera M."/>
            <person name="Konfortov B.A."/>
            <person name="Rivero F."/>
            <person name="Bankier A.T."/>
            <person name="Lehmann R."/>
            <person name="Hamlin N."/>
            <person name="Davies R."/>
            <person name="Gaudet P."/>
            <person name="Fey P."/>
            <person name="Pilcher K."/>
            <person name="Chen G."/>
            <person name="Saunders D."/>
            <person name="Sodergren E.J."/>
            <person name="Davis P."/>
            <person name="Kerhornou A."/>
            <person name="Nie X."/>
            <person name="Hall N."/>
            <person name="Anjard C."/>
            <person name="Hemphill L."/>
            <person name="Bason N."/>
            <person name="Farbrother P."/>
            <person name="Desany B."/>
            <person name="Just E."/>
            <person name="Morio T."/>
            <person name="Rost R."/>
            <person name="Churcher C.M."/>
            <person name="Cooper J."/>
            <person name="Haydock S."/>
            <person name="van Driessche N."/>
            <person name="Cronin A."/>
            <person name="Goodhead I."/>
            <person name="Muzny D.M."/>
            <person name="Mourier T."/>
            <person name="Pain A."/>
            <person name="Lu M."/>
            <person name="Harper D."/>
            <person name="Lindsay R."/>
            <person name="Hauser H."/>
            <person name="James K.D."/>
            <person name="Quiles M."/>
            <person name="Madan Babu M."/>
            <person name="Saito T."/>
            <person name="Buchrieser C."/>
            <person name="Wardroper A."/>
            <person name="Felder M."/>
            <person name="Thangavelu M."/>
            <person name="Johnson D."/>
            <person name="Knights A."/>
            <person name="Loulseged H."/>
            <person name="Mungall K.L."/>
            <person name="Oliver K."/>
            <person name="Price C."/>
            <person name="Quail M.A."/>
            <person name="Urushihara H."/>
            <person name="Hernandez J."/>
            <person name="Rabbinowitsch E."/>
            <person name="Steffen D."/>
            <person name="Sanders M."/>
            <person name="Ma J."/>
            <person name="Kohara Y."/>
            <person name="Sharp S."/>
            <person name="Simmonds M.N."/>
            <person name="Spiegler S."/>
            <person name="Tivey A."/>
            <person name="Sugano S."/>
            <person name="White B."/>
            <person name="Walker D."/>
            <person name="Woodward J.R."/>
            <person name="Winckler T."/>
            <person name="Tanaka Y."/>
            <person name="Shaulsky G."/>
            <person name="Schleicher M."/>
            <person name="Weinstock G.M."/>
            <person name="Rosenthal A."/>
            <person name="Cox E.C."/>
            <person name="Chisholm R.L."/>
            <person name="Gibbs R.A."/>
            <person name="Loomis W.F."/>
            <person name="Platzer M."/>
            <person name="Kay R.R."/>
            <person name="Williams J.G."/>
            <person name="Dear P.H."/>
            <person name="Noegel A.A."/>
            <person name="Barrell B.G."/>
            <person name="Kuspa A."/>
        </authorList>
    </citation>
    <scope>NUCLEOTIDE SEQUENCE [LARGE SCALE GENOMIC DNA]</scope>
    <source>
        <strain>AX4</strain>
    </source>
</reference>
<feature type="chain" id="PRO_0000328013" description="Eukaryotic translation initiation factor 4E">
    <location>
        <begin position="1"/>
        <end position="250"/>
    </location>
</feature>
<feature type="region of interest" description="Disordered" evidence="2">
    <location>
        <begin position="1"/>
        <end position="72"/>
    </location>
</feature>
<feature type="compositionally biased region" description="Low complexity" evidence="2">
    <location>
        <begin position="25"/>
        <end position="39"/>
    </location>
</feature>
<feature type="compositionally biased region" description="Basic and acidic residues" evidence="2">
    <location>
        <begin position="40"/>
        <end position="62"/>
    </location>
</feature>
<feature type="binding site" evidence="1">
    <location>
        <begin position="96"/>
        <end position="97"/>
    </location>
    <ligand>
        <name>mRNA</name>
        <dbReference type="ChEBI" id="CHEBI:33699"/>
    </ligand>
    <ligandPart>
        <name>N(7)-methylguanosine 5'-triphosphate group</name>
        <dbReference type="ChEBI" id="CHEBI:74429"/>
        <note>m7GTP residue in mRNA cap</note>
    </ligandPart>
</feature>
<feature type="binding site" evidence="1">
    <location>
        <begin position="142"/>
        <end position="143"/>
    </location>
    <ligand>
        <name>mRNA</name>
        <dbReference type="ChEBI" id="CHEBI:33699"/>
    </ligand>
    <ligandPart>
        <name>N(7)-methylguanosine 5'-triphosphate group</name>
        <dbReference type="ChEBI" id="CHEBI:74429"/>
        <note>m7GTP residue in mRNA cap</note>
    </ligandPart>
</feature>
<feature type="binding site" evidence="1">
    <location>
        <begin position="193"/>
        <end position="198"/>
    </location>
    <ligand>
        <name>mRNA</name>
        <dbReference type="ChEBI" id="CHEBI:33699"/>
    </ligand>
    <ligandPart>
        <name>N(7)-methylguanosine 5'-triphosphate group</name>
        <dbReference type="ChEBI" id="CHEBI:74429"/>
        <note>m7GTP residue in mRNA cap</note>
    </ligandPart>
</feature>
<feature type="binding site" evidence="1">
    <location>
        <begin position="239"/>
        <end position="241"/>
    </location>
    <ligand>
        <name>mRNA</name>
        <dbReference type="ChEBI" id="CHEBI:33699"/>
    </ligand>
    <ligandPart>
        <name>N(7)-methylguanosine 5'-triphosphate group</name>
        <dbReference type="ChEBI" id="CHEBI:74429"/>
        <note>m7GTP residue in mRNA cap</note>
    </ligandPart>
</feature>
<gene>
    <name type="primary">eif4e</name>
    <name type="ORF">DDB_G0268574</name>
</gene>
<dbReference type="EMBL" id="AAFI02000003">
    <property type="protein sequence ID" value="EAL73740.1"/>
    <property type="molecule type" value="Genomic_DNA"/>
</dbReference>
<dbReference type="RefSeq" id="XP_647593.1">
    <property type="nucleotide sequence ID" value="XM_642501.1"/>
</dbReference>
<dbReference type="SMR" id="Q55FE0"/>
<dbReference type="FunCoup" id="Q55FE0">
    <property type="interactions" value="511"/>
</dbReference>
<dbReference type="STRING" id="44689.Q55FE0"/>
<dbReference type="PaxDb" id="44689-DDB0234247"/>
<dbReference type="EnsemblProtists" id="EAL73740">
    <property type="protein sequence ID" value="EAL73740"/>
    <property type="gene ID" value="DDB_G0268574"/>
</dbReference>
<dbReference type="GeneID" id="8616405"/>
<dbReference type="KEGG" id="ddi:DDB_G0268574"/>
<dbReference type="dictyBase" id="DDB_G0268574">
    <property type="gene designation" value="eIF4e"/>
</dbReference>
<dbReference type="VEuPathDB" id="AmoebaDB:DDB_G0268574"/>
<dbReference type="eggNOG" id="KOG1670">
    <property type="taxonomic scope" value="Eukaryota"/>
</dbReference>
<dbReference type="HOGENOM" id="CLU_043552_2_2_1"/>
<dbReference type="InParanoid" id="Q55FE0"/>
<dbReference type="OMA" id="EEFWAIV"/>
<dbReference type="PhylomeDB" id="Q55FE0"/>
<dbReference type="Reactome" id="R-DDI-1169408">
    <property type="pathway name" value="ISG15 antiviral mechanism"/>
</dbReference>
<dbReference type="Reactome" id="R-DDI-156827">
    <property type="pathway name" value="L13a-mediated translational silencing of Ceruloplasmin expression"/>
</dbReference>
<dbReference type="Reactome" id="R-DDI-166208">
    <property type="pathway name" value="mTORC1-mediated signalling"/>
</dbReference>
<dbReference type="Reactome" id="R-DDI-72662">
    <property type="pathway name" value="Activation of the mRNA upon binding of the cap-binding complex and eIFs, and subsequent binding to 43S"/>
</dbReference>
<dbReference type="Reactome" id="R-DDI-72702">
    <property type="pathway name" value="Ribosomal scanning and start codon recognition"/>
</dbReference>
<dbReference type="PRO" id="PR:Q55FE0"/>
<dbReference type="Proteomes" id="UP000002195">
    <property type="component" value="Chromosome 1"/>
</dbReference>
<dbReference type="GO" id="GO:0016281">
    <property type="term" value="C:eukaryotic translation initiation factor 4F complex"/>
    <property type="evidence" value="ECO:0000318"/>
    <property type="project" value="GO_Central"/>
</dbReference>
<dbReference type="GO" id="GO:0000340">
    <property type="term" value="F:RNA 7-methylguanosine cap binding"/>
    <property type="evidence" value="ECO:0000318"/>
    <property type="project" value="GO_Central"/>
</dbReference>
<dbReference type="GO" id="GO:0003743">
    <property type="term" value="F:translation initiation factor activity"/>
    <property type="evidence" value="ECO:0000318"/>
    <property type="project" value="GO_Central"/>
</dbReference>
<dbReference type="GO" id="GO:0006972">
    <property type="term" value="P:hyperosmotic response"/>
    <property type="evidence" value="ECO:0000270"/>
    <property type="project" value="dictyBase"/>
</dbReference>
<dbReference type="GO" id="GO:0006417">
    <property type="term" value="P:regulation of translation"/>
    <property type="evidence" value="ECO:0007669"/>
    <property type="project" value="UniProtKB-KW"/>
</dbReference>
<dbReference type="GO" id="GO:0006413">
    <property type="term" value="P:translational initiation"/>
    <property type="evidence" value="ECO:0000318"/>
    <property type="project" value="GO_Central"/>
</dbReference>
<dbReference type="FunFam" id="3.30.760.10:FF:000056">
    <property type="entry name" value="Eukaryotic translation initiation factor 4E"/>
    <property type="match status" value="1"/>
</dbReference>
<dbReference type="Gene3D" id="3.30.760.10">
    <property type="entry name" value="RNA Cap, Translation Initiation Factor Eif4e"/>
    <property type="match status" value="1"/>
</dbReference>
<dbReference type="InterPro" id="IPR023398">
    <property type="entry name" value="TIF_eIF4e-like"/>
</dbReference>
<dbReference type="InterPro" id="IPR001040">
    <property type="entry name" value="TIF_eIF_4E"/>
</dbReference>
<dbReference type="PANTHER" id="PTHR11960">
    <property type="entry name" value="EUKARYOTIC TRANSLATION INITIATION FACTOR 4E RELATED"/>
    <property type="match status" value="1"/>
</dbReference>
<dbReference type="PANTHER" id="PTHR11960:SF8">
    <property type="entry name" value="EUKARYOTIC TRANSLATION INITIATION FACTOR 4E1-RELATED"/>
    <property type="match status" value="1"/>
</dbReference>
<dbReference type="Pfam" id="PF01652">
    <property type="entry name" value="IF4E"/>
    <property type="match status" value="1"/>
</dbReference>
<dbReference type="SUPFAM" id="SSF55418">
    <property type="entry name" value="eIF4e-like"/>
    <property type="match status" value="1"/>
</dbReference>
<protein>
    <recommendedName>
        <fullName>Eukaryotic translation initiation factor 4E</fullName>
        <shortName>eIF-4E</shortName>
        <shortName>eIF4E</shortName>
    </recommendedName>
</protein>
<proteinExistence type="inferred from homology"/>